<feature type="chain" id="PRO_0000319290" description="Formate-dependent phosphoribosylglycinamide formyltransferase">
    <location>
        <begin position="1"/>
        <end position="426"/>
    </location>
</feature>
<feature type="domain" description="ATP-grasp" evidence="1">
    <location>
        <begin position="123"/>
        <end position="324"/>
    </location>
</feature>
<feature type="binding site" evidence="1">
    <location>
        <begin position="26"/>
        <end position="27"/>
    </location>
    <ligand>
        <name>N(1)-(5-phospho-beta-D-ribosyl)glycinamide</name>
        <dbReference type="ChEBI" id="CHEBI:143788"/>
    </ligand>
</feature>
<feature type="binding site" evidence="1">
    <location>
        <position position="86"/>
    </location>
    <ligand>
        <name>N(1)-(5-phospho-beta-D-ribosyl)glycinamide</name>
        <dbReference type="ChEBI" id="CHEBI:143788"/>
    </ligand>
</feature>
<feature type="binding site" evidence="1">
    <location>
        <position position="118"/>
    </location>
    <ligand>
        <name>ATP</name>
        <dbReference type="ChEBI" id="CHEBI:30616"/>
    </ligand>
</feature>
<feature type="binding site" evidence="1">
    <location>
        <position position="158"/>
    </location>
    <ligand>
        <name>ATP</name>
        <dbReference type="ChEBI" id="CHEBI:30616"/>
    </ligand>
</feature>
<feature type="binding site" evidence="1">
    <location>
        <begin position="197"/>
        <end position="200"/>
    </location>
    <ligand>
        <name>ATP</name>
        <dbReference type="ChEBI" id="CHEBI:30616"/>
    </ligand>
</feature>
<feature type="binding site" evidence="1">
    <location>
        <position position="205"/>
    </location>
    <ligand>
        <name>ATP</name>
        <dbReference type="ChEBI" id="CHEBI:30616"/>
    </ligand>
</feature>
<feature type="binding site" evidence="1">
    <location>
        <position position="279"/>
    </location>
    <ligand>
        <name>Mg(2+)</name>
        <dbReference type="ChEBI" id="CHEBI:18420"/>
    </ligand>
</feature>
<feature type="binding site" evidence="1">
    <location>
        <position position="293"/>
    </location>
    <ligand>
        <name>Mg(2+)</name>
        <dbReference type="ChEBI" id="CHEBI:18420"/>
    </ligand>
</feature>
<feature type="binding site" evidence="1">
    <location>
        <position position="300"/>
    </location>
    <ligand>
        <name>N(1)-(5-phospho-beta-D-ribosyl)glycinamide</name>
        <dbReference type="ChEBI" id="CHEBI:143788"/>
    </ligand>
</feature>
<feature type="binding site" evidence="1">
    <location>
        <position position="374"/>
    </location>
    <ligand>
        <name>N(1)-(5-phospho-beta-D-ribosyl)glycinamide</name>
        <dbReference type="ChEBI" id="CHEBI:143788"/>
    </ligand>
</feature>
<feature type="binding site" evidence="1">
    <location>
        <begin position="381"/>
        <end position="382"/>
    </location>
    <ligand>
        <name>N(1)-(5-phospho-beta-D-ribosyl)glycinamide</name>
        <dbReference type="ChEBI" id="CHEBI:143788"/>
    </ligand>
</feature>
<proteinExistence type="inferred from homology"/>
<organism>
    <name type="scientific">Methanocella arvoryzae (strain DSM 22066 / NBRC 105507 / MRE50)</name>
    <dbReference type="NCBI Taxonomy" id="351160"/>
    <lineage>
        <taxon>Archaea</taxon>
        <taxon>Methanobacteriati</taxon>
        <taxon>Methanobacteriota</taxon>
        <taxon>Stenosarchaea group</taxon>
        <taxon>Methanomicrobia</taxon>
        <taxon>Methanocellales</taxon>
        <taxon>Methanocellaceae</taxon>
        <taxon>Methanocella</taxon>
    </lineage>
</organism>
<reference key="1">
    <citation type="journal article" date="2006" name="Science">
        <title>Genome of rice cluster I archaea -- the key methane producers in the rice rhizosphere.</title>
        <authorList>
            <person name="Erkel C."/>
            <person name="Kube M."/>
            <person name="Reinhardt R."/>
            <person name="Liesack W."/>
        </authorList>
    </citation>
    <scope>NUCLEOTIDE SEQUENCE [LARGE SCALE GENOMIC DNA]</scope>
    <source>
        <strain>DSM 22066 / NBRC 105507 / MRE50</strain>
    </source>
</reference>
<sequence>MGITARKVLGTPYANGAKLMFLGAGELGKETMIEAQRMGIEIVAVDRYANSPGMQVAHRSYVTNMKSERALLAIVEKEKPDAIIPEIEAINTDTLFKLEKEGFFVAPCANAVWTAMHRERLREAIASTGARTSKYEYATDLESFKAACKKIGFPCVSKPIMSSSGKGSYVLKSSKDVEKAFKEAAKARGSSDKIIVEEFIDFDVEITALSVRYLNGKGKPESKFVRPLGHYQIEGDYHASWHPWTDATDKKIDKLEKEIYDYAGRIMDKLGGYGLFAHEMFVDTKNGKVYANETACRPHDTGLVTIASMPFGYSEFALHAKAVLGIPIACEGKVIQPRSTAASHVILSHTEGWYPQFKVDGAYAPDTNVLIFGKPEAYEERRLGVVLATAGTVEDAKKKAQKAAHTVKVSANDKWAGQEITEKHYR</sequence>
<protein>
    <recommendedName>
        <fullName evidence="1">Formate-dependent phosphoribosylglycinamide formyltransferase</fullName>
        <ecNumber evidence="1">6.3.1.21</ecNumber>
    </recommendedName>
    <alternativeName>
        <fullName evidence="1">5'-phosphoribosylglycinamide transformylase 2</fullName>
    </alternativeName>
    <alternativeName>
        <fullName evidence="1">Formate-dependent GAR transformylase</fullName>
    </alternativeName>
    <alternativeName>
        <fullName evidence="1">GAR transformylase 2</fullName>
        <shortName evidence="1">GART 2</shortName>
    </alternativeName>
    <alternativeName>
        <fullName evidence="1">Non-folate glycinamide ribonucleotide transformylase</fullName>
    </alternativeName>
    <alternativeName>
        <fullName evidence="1">Phosphoribosylglycinamide formyltransferase 2</fullName>
    </alternativeName>
</protein>
<keyword id="KW-0067">ATP-binding</keyword>
<keyword id="KW-0436">Ligase</keyword>
<keyword id="KW-0460">Magnesium</keyword>
<keyword id="KW-0479">Metal-binding</keyword>
<keyword id="KW-0547">Nucleotide-binding</keyword>
<keyword id="KW-0658">Purine biosynthesis</keyword>
<keyword id="KW-1185">Reference proteome</keyword>
<comment type="function">
    <text evidence="1">Involved in the de novo purine biosynthesis. Catalyzes the transfer of formate to 5-phospho-ribosyl-glycinamide (GAR), producing 5-phospho-ribosyl-N-formylglycinamide (FGAR). Formate is provided by PurU via hydrolysis of 10-formyl-tetrahydrofolate.</text>
</comment>
<comment type="catalytic activity">
    <reaction evidence="1">
        <text>N(1)-(5-phospho-beta-D-ribosyl)glycinamide + formate + ATP = N(2)-formyl-N(1)-(5-phospho-beta-D-ribosyl)glycinamide + ADP + phosphate + H(+)</text>
        <dbReference type="Rhea" id="RHEA:24829"/>
        <dbReference type="ChEBI" id="CHEBI:15378"/>
        <dbReference type="ChEBI" id="CHEBI:15740"/>
        <dbReference type="ChEBI" id="CHEBI:30616"/>
        <dbReference type="ChEBI" id="CHEBI:43474"/>
        <dbReference type="ChEBI" id="CHEBI:143788"/>
        <dbReference type="ChEBI" id="CHEBI:147286"/>
        <dbReference type="ChEBI" id="CHEBI:456216"/>
        <dbReference type="EC" id="6.3.1.21"/>
    </reaction>
    <physiologicalReaction direction="left-to-right" evidence="1">
        <dbReference type="Rhea" id="RHEA:24830"/>
    </physiologicalReaction>
</comment>
<comment type="pathway">
    <text evidence="1">Purine metabolism; IMP biosynthesis via de novo pathway; N(2)-formyl-N(1)-(5-phospho-D-ribosyl)glycinamide from N(1)-(5-phospho-D-ribosyl)glycinamide (formate route): step 1/1.</text>
</comment>
<comment type="subunit">
    <text evidence="1">Homodimer.</text>
</comment>
<comment type="similarity">
    <text evidence="1">Belongs to the PurK/PurT family.</text>
</comment>
<evidence type="ECO:0000255" key="1">
    <source>
        <dbReference type="HAMAP-Rule" id="MF_01643"/>
    </source>
</evidence>
<dbReference type="EC" id="6.3.1.21" evidence="1"/>
<dbReference type="EMBL" id="AM114193">
    <property type="protein sequence ID" value="CAJ36675.1"/>
    <property type="molecule type" value="Genomic_DNA"/>
</dbReference>
<dbReference type="RefSeq" id="WP_012035876.1">
    <property type="nucleotide sequence ID" value="NC_009464.1"/>
</dbReference>
<dbReference type="SMR" id="Q0W4L8"/>
<dbReference type="STRING" id="351160.RCIX1405"/>
<dbReference type="GeneID" id="5144249"/>
<dbReference type="KEGG" id="rci:RCIX1405"/>
<dbReference type="PATRIC" id="fig|351160.9.peg.1587"/>
<dbReference type="eggNOG" id="arCOG01598">
    <property type="taxonomic scope" value="Archaea"/>
</dbReference>
<dbReference type="OrthoDB" id="9299at2157"/>
<dbReference type="UniPathway" id="UPA00074">
    <property type="reaction ID" value="UER00127"/>
</dbReference>
<dbReference type="Proteomes" id="UP000000663">
    <property type="component" value="Chromosome"/>
</dbReference>
<dbReference type="GO" id="GO:0005829">
    <property type="term" value="C:cytosol"/>
    <property type="evidence" value="ECO:0007669"/>
    <property type="project" value="TreeGrafter"/>
</dbReference>
<dbReference type="GO" id="GO:0005524">
    <property type="term" value="F:ATP binding"/>
    <property type="evidence" value="ECO:0007669"/>
    <property type="project" value="UniProtKB-UniRule"/>
</dbReference>
<dbReference type="GO" id="GO:0000287">
    <property type="term" value="F:magnesium ion binding"/>
    <property type="evidence" value="ECO:0007669"/>
    <property type="project" value="InterPro"/>
</dbReference>
<dbReference type="GO" id="GO:0043815">
    <property type="term" value="F:phosphoribosylglycinamide formyltransferase 2 activity"/>
    <property type="evidence" value="ECO:0007669"/>
    <property type="project" value="UniProtKB-UniRule"/>
</dbReference>
<dbReference type="GO" id="GO:0004644">
    <property type="term" value="F:phosphoribosylglycinamide formyltransferase activity"/>
    <property type="evidence" value="ECO:0007669"/>
    <property type="project" value="InterPro"/>
</dbReference>
<dbReference type="GO" id="GO:0006189">
    <property type="term" value="P:'de novo' IMP biosynthetic process"/>
    <property type="evidence" value="ECO:0007669"/>
    <property type="project" value="UniProtKB-UniRule"/>
</dbReference>
<dbReference type="Gene3D" id="3.40.50.20">
    <property type="match status" value="1"/>
</dbReference>
<dbReference type="Gene3D" id="3.30.1490.20">
    <property type="entry name" value="ATP-grasp fold, A domain"/>
    <property type="match status" value="1"/>
</dbReference>
<dbReference type="Gene3D" id="3.30.470.20">
    <property type="entry name" value="ATP-grasp fold, B domain"/>
    <property type="match status" value="1"/>
</dbReference>
<dbReference type="HAMAP" id="MF_01643">
    <property type="entry name" value="PurT"/>
    <property type="match status" value="1"/>
</dbReference>
<dbReference type="InterPro" id="IPR011761">
    <property type="entry name" value="ATP-grasp"/>
</dbReference>
<dbReference type="InterPro" id="IPR003135">
    <property type="entry name" value="ATP-grasp_carboxylate-amine"/>
</dbReference>
<dbReference type="InterPro" id="IPR013815">
    <property type="entry name" value="ATP_grasp_subdomain_1"/>
</dbReference>
<dbReference type="InterPro" id="IPR016185">
    <property type="entry name" value="PreATP-grasp_dom_sf"/>
</dbReference>
<dbReference type="InterPro" id="IPR005862">
    <property type="entry name" value="PurT"/>
</dbReference>
<dbReference type="InterPro" id="IPR054350">
    <property type="entry name" value="PurT/PurK_preATP-grasp"/>
</dbReference>
<dbReference type="InterPro" id="IPR048740">
    <property type="entry name" value="PurT_C"/>
</dbReference>
<dbReference type="InterPro" id="IPR011054">
    <property type="entry name" value="Rudment_hybrid_motif"/>
</dbReference>
<dbReference type="NCBIfam" id="NF006766">
    <property type="entry name" value="PRK09288.1"/>
    <property type="match status" value="1"/>
</dbReference>
<dbReference type="PANTHER" id="PTHR43055">
    <property type="entry name" value="FORMATE-DEPENDENT PHOSPHORIBOSYLGLYCINAMIDE FORMYLTRANSFERASE"/>
    <property type="match status" value="1"/>
</dbReference>
<dbReference type="PANTHER" id="PTHR43055:SF1">
    <property type="entry name" value="FORMATE-DEPENDENT PHOSPHORIBOSYLGLYCINAMIDE FORMYLTRANSFERASE"/>
    <property type="match status" value="1"/>
</dbReference>
<dbReference type="Pfam" id="PF02222">
    <property type="entry name" value="ATP-grasp"/>
    <property type="match status" value="1"/>
</dbReference>
<dbReference type="Pfam" id="PF21244">
    <property type="entry name" value="PurT_C"/>
    <property type="match status" value="1"/>
</dbReference>
<dbReference type="Pfam" id="PF22660">
    <property type="entry name" value="RS_preATP-grasp-like"/>
    <property type="match status" value="1"/>
</dbReference>
<dbReference type="SUPFAM" id="SSF56059">
    <property type="entry name" value="Glutathione synthetase ATP-binding domain-like"/>
    <property type="match status" value="1"/>
</dbReference>
<dbReference type="SUPFAM" id="SSF52440">
    <property type="entry name" value="PreATP-grasp domain"/>
    <property type="match status" value="1"/>
</dbReference>
<dbReference type="SUPFAM" id="SSF51246">
    <property type="entry name" value="Rudiment single hybrid motif"/>
    <property type="match status" value="1"/>
</dbReference>
<dbReference type="PROSITE" id="PS50975">
    <property type="entry name" value="ATP_GRASP"/>
    <property type="match status" value="1"/>
</dbReference>
<accession>Q0W4L8</accession>
<name>PURT_METAR</name>
<gene>
    <name evidence="1" type="primary">purT</name>
    <name type="ordered locus">UNCMA_15500</name>
    <name type="ORF">RCIX1405</name>
</gene>